<comment type="function">
    <text evidence="1">Specifically methylates the pseudouridine at position 1915 (m3Psi1915) in 23S rRNA.</text>
</comment>
<comment type="catalytic activity">
    <reaction evidence="1">
        <text>pseudouridine(1915) in 23S rRNA + S-adenosyl-L-methionine = N(3)-methylpseudouridine(1915) in 23S rRNA + S-adenosyl-L-homocysteine + H(+)</text>
        <dbReference type="Rhea" id="RHEA:42752"/>
        <dbReference type="Rhea" id="RHEA-COMP:10221"/>
        <dbReference type="Rhea" id="RHEA-COMP:10222"/>
        <dbReference type="ChEBI" id="CHEBI:15378"/>
        <dbReference type="ChEBI" id="CHEBI:57856"/>
        <dbReference type="ChEBI" id="CHEBI:59789"/>
        <dbReference type="ChEBI" id="CHEBI:65314"/>
        <dbReference type="ChEBI" id="CHEBI:74486"/>
        <dbReference type="EC" id="2.1.1.177"/>
    </reaction>
</comment>
<comment type="subcellular location">
    <subcellularLocation>
        <location evidence="1">Cytoplasm</location>
    </subcellularLocation>
</comment>
<comment type="similarity">
    <text evidence="1">Belongs to the RNA methyltransferase RlmH family.</text>
</comment>
<feature type="chain" id="PRO_1000061804" description="Putative ribosomal RNA large subunit methyltransferase H">
    <location>
        <begin position="1"/>
        <end position="159"/>
    </location>
</feature>
<feature type="binding site" evidence="1">
    <location>
        <position position="76"/>
    </location>
    <ligand>
        <name>S-adenosyl-L-methionine</name>
        <dbReference type="ChEBI" id="CHEBI:59789"/>
    </ligand>
</feature>
<feature type="binding site" evidence="1">
    <location>
        <position position="108"/>
    </location>
    <ligand>
        <name>S-adenosyl-L-methionine</name>
        <dbReference type="ChEBI" id="CHEBI:59789"/>
    </ligand>
</feature>
<feature type="binding site" evidence="1">
    <location>
        <begin position="127"/>
        <end position="132"/>
    </location>
    <ligand>
        <name>S-adenosyl-L-methionine</name>
        <dbReference type="ChEBI" id="CHEBI:59789"/>
    </ligand>
</feature>
<sequence length="159" mass="17652">MQVRIIAVGKIKERFLSEGIAEYTKRLSPYLKLSIVEIPEEHRGTRAPAGQEELAKEKEGGRILAAIPERAYVVALDLRGTEISSIELAARMHDWQLAGTNTIAFVIGGDLGLSDAVINRAAFRLSLSPLTFTHPMARLILVEQLYRACRINSGEPYHK</sequence>
<organism>
    <name type="scientific">Methanoregula boonei (strain DSM 21154 / JCM 14090 / 6A8)</name>
    <dbReference type="NCBI Taxonomy" id="456442"/>
    <lineage>
        <taxon>Archaea</taxon>
        <taxon>Methanobacteriati</taxon>
        <taxon>Methanobacteriota</taxon>
        <taxon>Stenosarchaea group</taxon>
        <taxon>Methanomicrobia</taxon>
        <taxon>Methanomicrobiales</taxon>
        <taxon>Methanoregulaceae</taxon>
        <taxon>Methanoregula</taxon>
    </lineage>
</organism>
<accession>A7IAU3</accession>
<name>RLMH_METB6</name>
<keyword id="KW-0963">Cytoplasm</keyword>
<keyword id="KW-0489">Methyltransferase</keyword>
<keyword id="KW-1185">Reference proteome</keyword>
<keyword id="KW-0698">rRNA processing</keyword>
<keyword id="KW-0949">S-adenosyl-L-methionine</keyword>
<keyword id="KW-0808">Transferase</keyword>
<proteinExistence type="inferred from homology"/>
<reference key="1">
    <citation type="journal article" date="2015" name="Microbiology">
        <title>Genome of Methanoregula boonei 6A8 reveals adaptations to oligotrophic peatland environments.</title>
        <authorList>
            <person name="Braeuer S."/>
            <person name="Cadillo-Quiroz H."/>
            <person name="Kyrpides N."/>
            <person name="Woyke T."/>
            <person name="Goodwin L."/>
            <person name="Detter C."/>
            <person name="Podell S."/>
            <person name="Yavitt J.B."/>
            <person name="Zinder S.H."/>
        </authorList>
    </citation>
    <scope>NUCLEOTIDE SEQUENCE [LARGE SCALE GENOMIC DNA]</scope>
    <source>
        <strain>DSM 21154 / JCM 14090 / 6A8</strain>
    </source>
</reference>
<gene>
    <name evidence="1" type="primary">rlmH</name>
    <name type="ordered locus">Mboo_2340</name>
</gene>
<protein>
    <recommendedName>
        <fullName evidence="1">Putative ribosomal RNA large subunit methyltransferase H</fullName>
        <ecNumber evidence="1">2.1.1.177</ecNumber>
    </recommendedName>
    <alternativeName>
        <fullName evidence="1">23S rRNA (pseudouridine1915-N3)-methyltransferase</fullName>
    </alternativeName>
    <alternativeName>
        <fullName evidence="1">rRNA (pseudouridine-N3-)-methyltransferase RlmH</fullName>
    </alternativeName>
</protein>
<dbReference type="EC" id="2.1.1.177" evidence="1"/>
<dbReference type="EMBL" id="CP000780">
    <property type="protein sequence ID" value="ABS56854.1"/>
    <property type="molecule type" value="Genomic_DNA"/>
</dbReference>
<dbReference type="RefSeq" id="WP_012107915.1">
    <property type="nucleotide sequence ID" value="NC_009712.1"/>
</dbReference>
<dbReference type="SMR" id="A7IAU3"/>
<dbReference type="STRING" id="456442.Mboo_2340"/>
<dbReference type="GeneID" id="5411033"/>
<dbReference type="KEGG" id="mbn:Mboo_2340"/>
<dbReference type="eggNOG" id="arCOG05111">
    <property type="taxonomic scope" value="Archaea"/>
</dbReference>
<dbReference type="HOGENOM" id="CLU_100552_0_0_2"/>
<dbReference type="OrthoDB" id="111266at2157"/>
<dbReference type="Proteomes" id="UP000002408">
    <property type="component" value="Chromosome"/>
</dbReference>
<dbReference type="GO" id="GO:0005737">
    <property type="term" value="C:cytoplasm"/>
    <property type="evidence" value="ECO:0007669"/>
    <property type="project" value="UniProtKB-SubCell"/>
</dbReference>
<dbReference type="GO" id="GO:0070038">
    <property type="term" value="F:rRNA (pseudouridine-N3-)-methyltransferase activity"/>
    <property type="evidence" value="ECO:0007669"/>
    <property type="project" value="UniProtKB-UniRule"/>
</dbReference>
<dbReference type="CDD" id="cd18081">
    <property type="entry name" value="RlmH-like"/>
    <property type="match status" value="1"/>
</dbReference>
<dbReference type="Gene3D" id="3.40.1280.10">
    <property type="match status" value="1"/>
</dbReference>
<dbReference type="HAMAP" id="MF_00658">
    <property type="entry name" value="23SrRNA_methyltr_H"/>
    <property type="match status" value="1"/>
</dbReference>
<dbReference type="InterPro" id="IPR029028">
    <property type="entry name" value="Alpha/beta_knot_MTases"/>
</dbReference>
<dbReference type="InterPro" id="IPR003742">
    <property type="entry name" value="RlmH-like"/>
</dbReference>
<dbReference type="InterPro" id="IPR029026">
    <property type="entry name" value="tRNA_m1G_MTases_N"/>
</dbReference>
<dbReference type="NCBIfam" id="NF000985">
    <property type="entry name" value="PRK00103.1-3"/>
    <property type="match status" value="1"/>
</dbReference>
<dbReference type="NCBIfam" id="NF000986">
    <property type="entry name" value="PRK00103.1-4"/>
    <property type="match status" value="1"/>
</dbReference>
<dbReference type="NCBIfam" id="TIGR00246">
    <property type="entry name" value="tRNA_RlmH_YbeA"/>
    <property type="match status" value="1"/>
</dbReference>
<dbReference type="PANTHER" id="PTHR33603">
    <property type="entry name" value="METHYLTRANSFERASE"/>
    <property type="match status" value="1"/>
</dbReference>
<dbReference type="PANTHER" id="PTHR33603:SF1">
    <property type="entry name" value="RIBOSOMAL RNA LARGE SUBUNIT METHYLTRANSFERASE H"/>
    <property type="match status" value="1"/>
</dbReference>
<dbReference type="Pfam" id="PF02590">
    <property type="entry name" value="SPOUT_MTase"/>
    <property type="match status" value="1"/>
</dbReference>
<dbReference type="PIRSF" id="PIRSF004505">
    <property type="entry name" value="MT_bac"/>
    <property type="match status" value="1"/>
</dbReference>
<dbReference type="SUPFAM" id="SSF75217">
    <property type="entry name" value="alpha/beta knot"/>
    <property type="match status" value="1"/>
</dbReference>
<evidence type="ECO:0000255" key="1">
    <source>
        <dbReference type="HAMAP-Rule" id="MF_00658"/>
    </source>
</evidence>